<reference key="1">
    <citation type="journal article" date="2003" name="Mol. Microbiol.">
        <title>An integrated analysis of the genome of the hyperthermophilic archaeon Pyrococcus abyssi.</title>
        <authorList>
            <person name="Cohen G.N."/>
            <person name="Barbe V."/>
            <person name="Flament D."/>
            <person name="Galperin M."/>
            <person name="Heilig R."/>
            <person name="Lecompte O."/>
            <person name="Poch O."/>
            <person name="Prieur D."/>
            <person name="Querellou J."/>
            <person name="Ripp R."/>
            <person name="Thierry J.-C."/>
            <person name="Van der Oost J."/>
            <person name="Weissenbach J."/>
            <person name="Zivanovic Y."/>
            <person name="Forterre P."/>
        </authorList>
    </citation>
    <scope>NUCLEOTIDE SEQUENCE [LARGE SCALE GENOMIC DNA]</scope>
    <source>
        <strain>GE5 / Orsay</strain>
    </source>
</reference>
<reference key="2">
    <citation type="journal article" date="2012" name="Curr. Microbiol.">
        <title>Re-annotation of two hyperthermophilic archaea Pyrococcus abyssi GE5 and Pyrococcus furiosus DSM 3638.</title>
        <authorList>
            <person name="Gao J."/>
            <person name="Wang J."/>
        </authorList>
    </citation>
    <scope>GENOME REANNOTATION</scope>
    <source>
        <strain>GE5 / Orsay</strain>
    </source>
</reference>
<organism>
    <name type="scientific">Pyrococcus abyssi (strain GE5 / Orsay)</name>
    <dbReference type="NCBI Taxonomy" id="272844"/>
    <lineage>
        <taxon>Archaea</taxon>
        <taxon>Methanobacteriati</taxon>
        <taxon>Methanobacteriota</taxon>
        <taxon>Thermococci</taxon>
        <taxon>Thermococcales</taxon>
        <taxon>Thermococcaceae</taxon>
        <taxon>Pyrococcus</taxon>
    </lineage>
</organism>
<dbReference type="EMBL" id="AJ248285">
    <property type="protein sequence ID" value="CAB49589.1"/>
    <property type="molecule type" value="Genomic_DNA"/>
</dbReference>
<dbReference type="EMBL" id="HE613800">
    <property type="protein sequence ID" value="CCE70061.1"/>
    <property type="molecule type" value="Genomic_DNA"/>
</dbReference>
<dbReference type="PIR" id="D75109">
    <property type="entry name" value="D75109"/>
</dbReference>
<dbReference type="RefSeq" id="WP_010867791.1">
    <property type="nucleotide sequence ID" value="NC_000868.1"/>
</dbReference>
<dbReference type="PDB" id="6SW9">
    <property type="method" value="EM"/>
    <property type="resolution" value="4.20 A"/>
    <property type="chains" value="X=1-71"/>
</dbReference>
<dbReference type="PDB" id="6SWC">
    <property type="method" value="EM"/>
    <property type="resolution" value="3.30 A"/>
    <property type="chains" value="X=1-71"/>
</dbReference>
<dbReference type="PDB" id="6SWE">
    <property type="method" value="EM"/>
    <property type="resolution" value="3.10 A"/>
    <property type="chains" value="X=1-71"/>
</dbReference>
<dbReference type="PDB" id="7ZAG">
    <property type="method" value="EM"/>
    <property type="resolution" value="2.77 A"/>
    <property type="chains" value="X=1-71"/>
</dbReference>
<dbReference type="PDB" id="7ZAH">
    <property type="method" value="EM"/>
    <property type="resolution" value="2.70 A"/>
    <property type="chains" value="X=4-68"/>
</dbReference>
<dbReference type="PDB" id="7ZAI">
    <property type="method" value="EM"/>
    <property type="resolution" value="2.60 A"/>
    <property type="chains" value="X=1-71"/>
</dbReference>
<dbReference type="PDB" id="7ZHG">
    <property type="method" value="EM"/>
    <property type="resolution" value="2.25 A"/>
    <property type="chains" value="X=1-71"/>
</dbReference>
<dbReference type="PDBsum" id="6SW9"/>
<dbReference type="PDBsum" id="6SWC"/>
<dbReference type="PDBsum" id="6SWE"/>
<dbReference type="PDBsum" id="7ZAG"/>
<dbReference type="PDBsum" id="7ZAH"/>
<dbReference type="PDBsum" id="7ZAI"/>
<dbReference type="PDBsum" id="7ZHG"/>
<dbReference type="EMDB" id="EMD-10320"/>
<dbReference type="EMDB" id="EMD-10322"/>
<dbReference type="EMDB" id="EMD-10324"/>
<dbReference type="EMDB" id="EMD-14579"/>
<dbReference type="EMDB" id="EMD-14580"/>
<dbReference type="EMDB" id="EMD-14581"/>
<dbReference type="EMDB" id="EMD-14731"/>
<dbReference type="EMDB" id="EMD-8148"/>
<dbReference type="SMR" id="P61029"/>
<dbReference type="STRING" id="272844.PAB7165"/>
<dbReference type="KEGG" id="pab:PAB7165"/>
<dbReference type="PATRIC" id="fig|272844.11.peg.706"/>
<dbReference type="eggNOG" id="arCOG04314">
    <property type="taxonomic scope" value="Archaea"/>
</dbReference>
<dbReference type="HOGENOM" id="CLU_178987_2_1_2"/>
<dbReference type="OrthoDB" id="7620at2157"/>
<dbReference type="PhylomeDB" id="P61029"/>
<dbReference type="Proteomes" id="UP000000810">
    <property type="component" value="Chromosome"/>
</dbReference>
<dbReference type="Proteomes" id="UP000009139">
    <property type="component" value="Chromosome"/>
</dbReference>
<dbReference type="GO" id="GO:0022627">
    <property type="term" value="C:cytosolic small ribosomal subunit"/>
    <property type="evidence" value="ECO:0007669"/>
    <property type="project" value="TreeGrafter"/>
</dbReference>
<dbReference type="GO" id="GO:0003735">
    <property type="term" value="F:structural constituent of ribosome"/>
    <property type="evidence" value="ECO:0007669"/>
    <property type="project" value="InterPro"/>
</dbReference>
<dbReference type="GO" id="GO:0030490">
    <property type="term" value="P:maturation of SSU-rRNA"/>
    <property type="evidence" value="ECO:0007669"/>
    <property type="project" value="TreeGrafter"/>
</dbReference>
<dbReference type="GO" id="GO:0000028">
    <property type="term" value="P:ribosomal small subunit assembly"/>
    <property type="evidence" value="ECO:0007669"/>
    <property type="project" value="TreeGrafter"/>
</dbReference>
<dbReference type="GO" id="GO:0006412">
    <property type="term" value="P:translation"/>
    <property type="evidence" value="ECO:0007669"/>
    <property type="project" value="UniProtKB-UniRule"/>
</dbReference>
<dbReference type="CDD" id="cd04457">
    <property type="entry name" value="S1_S28E"/>
    <property type="match status" value="1"/>
</dbReference>
<dbReference type="FunFam" id="2.40.50.140:FF:000145">
    <property type="entry name" value="30S ribosomal protein S28e"/>
    <property type="match status" value="1"/>
</dbReference>
<dbReference type="Gene3D" id="2.40.50.140">
    <property type="entry name" value="Nucleic acid-binding proteins"/>
    <property type="match status" value="1"/>
</dbReference>
<dbReference type="HAMAP" id="MF_00292">
    <property type="entry name" value="Ribosomal_eS28"/>
    <property type="match status" value="1"/>
</dbReference>
<dbReference type="InterPro" id="IPR012340">
    <property type="entry name" value="NA-bd_OB-fold"/>
</dbReference>
<dbReference type="InterPro" id="IPR000289">
    <property type="entry name" value="Ribosomal_eS28"/>
</dbReference>
<dbReference type="InterPro" id="IPR028626">
    <property type="entry name" value="Ribosomal_eS28_CS"/>
</dbReference>
<dbReference type="NCBIfam" id="NF003080">
    <property type="entry name" value="PRK04007.1"/>
    <property type="match status" value="1"/>
</dbReference>
<dbReference type="PANTHER" id="PTHR10769">
    <property type="entry name" value="40S RIBOSOMAL PROTEIN S28"/>
    <property type="match status" value="1"/>
</dbReference>
<dbReference type="PANTHER" id="PTHR10769:SF3">
    <property type="entry name" value="SMALL RIBOSOMAL SUBUNIT PROTEIN ES28"/>
    <property type="match status" value="1"/>
</dbReference>
<dbReference type="Pfam" id="PF01200">
    <property type="entry name" value="Ribosomal_S28e"/>
    <property type="match status" value="1"/>
</dbReference>
<dbReference type="SUPFAM" id="SSF50249">
    <property type="entry name" value="Nucleic acid-binding proteins"/>
    <property type="match status" value="1"/>
</dbReference>
<dbReference type="PROSITE" id="PS00961">
    <property type="entry name" value="RIBOSOMAL_S28E"/>
    <property type="match status" value="1"/>
</dbReference>
<accession>P61029</accession>
<accession>G8ZJD4</accession>
<accession>O74014</accession>
<evidence type="ECO:0000305" key="1"/>
<evidence type="ECO:0007829" key="2">
    <source>
        <dbReference type="PDB" id="7ZHG"/>
    </source>
</evidence>
<protein>
    <recommendedName>
        <fullName evidence="1">Small ribosomal subunit protein eS28</fullName>
    </recommendedName>
    <alternativeName>
        <fullName>30S ribosomal protein S28e</fullName>
    </alternativeName>
</protein>
<proteinExistence type="evidence at protein level"/>
<sequence>MAEDEGYPAEVIEIIGRTGTTGDVTQVKVRILEGRDKGRVIRRNVRGPVRVGDILILRETEREAREIKSRR</sequence>
<comment type="similarity">
    <text evidence="1">Belongs to the eukaryotic ribosomal protein eS28 family.</text>
</comment>
<feature type="chain" id="PRO_0000136856" description="Small ribosomal subunit protein eS28">
    <location>
        <begin position="1"/>
        <end position="71"/>
    </location>
</feature>
<feature type="strand" evidence="2">
    <location>
        <begin position="7"/>
        <end position="22"/>
    </location>
</feature>
<feature type="strand" evidence="2">
    <location>
        <begin position="24"/>
        <end position="31"/>
    </location>
</feature>
<feature type="turn" evidence="2">
    <location>
        <begin position="35"/>
        <end position="38"/>
    </location>
</feature>
<feature type="strand" evidence="2">
    <location>
        <begin position="40"/>
        <end position="47"/>
    </location>
</feature>
<feature type="strand" evidence="2">
    <location>
        <begin position="54"/>
        <end position="58"/>
    </location>
</feature>
<name>RS28_PYRAB</name>
<keyword id="KW-0002">3D-structure</keyword>
<keyword id="KW-0687">Ribonucleoprotein</keyword>
<keyword id="KW-0689">Ribosomal protein</keyword>
<gene>
    <name type="primary">rps28e</name>
    <name type="ordered locus">PYRAB06760</name>
    <name type="ORF">PAB7165</name>
</gene>